<gene>
    <name evidence="2" type="primary">dctP</name>
    <name evidence="8" type="ordered locus">Shew_1446</name>
</gene>
<evidence type="ECO:0000250" key="1">
    <source>
        <dbReference type="UniProtKB" id="P37735"/>
    </source>
</evidence>
<evidence type="ECO:0000250" key="2">
    <source>
        <dbReference type="UniProtKB" id="Q9HU18"/>
    </source>
</evidence>
<evidence type="ECO:0000255" key="3"/>
<evidence type="ECO:0000269" key="4">
    <source>
    </source>
</evidence>
<evidence type="ECO:0000269" key="5">
    <source>
    </source>
</evidence>
<evidence type="ECO:0000305" key="6"/>
<evidence type="ECO:0000305" key="7">
    <source>
    </source>
</evidence>
<evidence type="ECO:0000312" key="8">
    <source>
        <dbReference type="EMBL" id="ABO23313.1"/>
    </source>
</evidence>
<evidence type="ECO:0007744" key="9">
    <source>
        <dbReference type="PDB" id="4O7M"/>
    </source>
</evidence>
<evidence type="ECO:0007744" key="10">
    <source>
        <dbReference type="PDB" id="4OA4"/>
    </source>
</evidence>
<evidence type="ECO:0007829" key="11">
    <source>
        <dbReference type="PDB" id="4O7M"/>
    </source>
</evidence>
<dbReference type="EMBL" id="CP000606">
    <property type="protein sequence ID" value="ABO23313.1"/>
    <property type="molecule type" value="Genomic_DNA"/>
</dbReference>
<dbReference type="PDB" id="4O7M">
    <property type="method" value="X-ray"/>
    <property type="resolution" value="1.50 A"/>
    <property type="chains" value="A/B/C/D=32-336"/>
</dbReference>
<dbReference type="PDB" id="4OA4">
    <property type="method" value="X-ray"/>
    <property type="resolution" value="1.60 A"/>
    <property type="chains" value="A/B/C/D=32-336"/>
</dbReference>
<dbReference type="PDBsum" id="4O7M"/>
<dbReference type="PDBsum" id="4OA4"/>
<dbReference type="SMR" id="A3QCW5"/>
<dbReference type="STRING" id="323850.Shew_1446"/>
<dbReference type="KEGG" id="slo:Shew_1446"/>
<dbReference type="eggNOG" id="COG1638">
    <property type="taxonomic scope" value="Bacteria"/>
</dbReference>
<dbReference type="HOGENOM" id="CLU_036176_1_3_6"/>
<dbReference type="OrthoDB" id="9771186at2"/>
<dbReference type="EvolutionaryTrace" id="A3QCW5"/>
<dbReference type="Proteomes" id="UP000001558">
    <property type="component" value="Chromosome"/>
</dbReference>
<dbReference type="GO" id="GO:0030288">
    <property type="term" value="C:outer membrane-bounded periplasmic space"/>
    <property type="evidence" value="ECO:0007669"/>
    <property type="project" value="InterPro"/>
</dbReference>
<dbReference type="GO" id="GO:0015740">
    <property type="term" value="P:C4-dicarboxylate transport"/>
    <property type="evidence" value="ECO:0007669"/>
    <property type="project" value="TreeGrafter"/>
</dbReference>
<dbReference type="GO" id="GO:0055085">
    <property type="term" value="P:transmembrane transport"/>
    <property type="evidence" value="ECO:0007669"/>
    <property type="project" value="InterPro"/>
</dbReference>
<dbReference type="CDD" id="cd13674">
    <property type="entry name" value="PBP2_TRAP_SBP_like_1"/>
    <property type="match status" value="1"/>
</dbReference>
<dbReference type="FunFam" id="3.40.190.170:FF:000001">
    <property type="entry name" value="TRAP dicarboxylate transporter, DctP subunit"/>
    <property type="match status" value="1"/>
</dbReference>
<dbReference type="Gene3D" id="3.40.190.170">
    <property type="entry name" value="Bacterial extracellular solute-binding protein, family 7"/>
    <property type="match status" value="1"/>
</dbReference>
<dbReference type="InterPro" id="IPR018389">
    <property type="entry name" value="DctP_fam"/>
</dbReference>
<dbReference type="InterPro" id="IPR004682">
    <property type="entry name" value="TRAP_DctP"/>
</dbReference>
<dbReference type="InterPro" id="IPR038404">
    <property type="entry name" value="TRAP_DctP_sf"/>
</dbReference>
<dbReference type="NCBIfam" id="TIGR00787">
    <property type="entry name" value="dctP"/>
    <property type="match status" value="1"/>
</dbReference>
<dbReference type="NCBIfam" id="NF037995">
    <property type="entry name" value="TRAP_S1"/>
    <property type="match status" value="1"/>
</dbReference>
<dbReference type="PANTHER" id="PTHR33376">
    <property type="match status" value="1"/>
</dbReference>
<dbReference type="PANTHER" id="PTHR33376:SF7">
    <property type="entry name" value="C4-DICARBOXYLATE-BINDING PROTEIN DCTB"/>
    <property type="match status" value="1"/>
</dbReference>
<dbReference type="Pfam" id="PF03480">
    <property type="entry name" value="DctP"/>
    <property type="match status" value="1"/>
</dbReference>
<dbReference type="PIRSF" id="PIRSF006470">
    <property type="entry name" value="DctB"/>
    <property type="match status" value="1"/>
</dbReference>
<name>DCTP_SHELP</name>
<sequence>MTRLNTCTFIKQIVKMTSIAALLGASLNSWAAPTEIKFSHVVAENTPKGQMALKFKQLVEERLPGEYQVNVFPNSQLFGDNNELSALLLNDVQFVAPSLSKFERYTKKLQLFDLPFLFKDMDAVNRFQQSDAGQQLLNSMKRKGVVGLGYLHNGMKQFSASSPLVLPEDAQGKKFRIMASDVLAAQFQAVEAIPVKKPFSEVFTLLQTRAIDGQENTWSNIYSKKFYEVQSNITESNHGVLDYMVVTSNTFWKSLPADKRKVIKASLDEAIAYGNEIAAAKVNKDKQAIIDSKRSEVTYLTPEQRAAWVNAMKPVWAQFEDKIGKDLIDAAVASNE</sequence>
<reference key="1">
    <citation type="submission" date="2007-03" db="EMBL/GenBank/DDBJ databases">
        <title>Complete sequence of Shewanella loihica PV-4.</title>
        <authorList>
            <consortium name="US DOE Joint Genome Institute"/>
            <person name="Copeland A."/>
            <person name="Lucas S."/>
            <person name="Lapidus A."/>
            <person name="Barry K."/>
            <person name="Detter J.C."/>
            <person name="Glavina del Rio T."/>
            <person name="Hammon N."/>
            <person name="Israni S."/>
            <person name="Dalin E."/>
            <person name="Tice H."/>
            <person name="Pitluck S."/>
            <person name="Chain P."/>
            <person name="Malfatti S."/>
            <person name="Shin M."/>
            <person name="Vergez L."/>
            <person name="Schmutz J."/>
            <person name="Larimer F."/>
            <person name="Land M."/>
            <person name="Hauser L."/>
            <person name="Kyrpides N."/>
            <person name="Mikhailova N."/>
            <person name="Romine M.F."/>
            <person name="Serres G."/>
            <person name="Fredrickson J."/>
            <person name="Tiedje J."/>
            <person name="Richardson P."/>
        </authorList>
    </citation>
    <scope>NUCLEOTIDE SEQUENCE [LARGE SCALE GENOMIC DNA]</scope>
    <source>
        <strain>ATCC BAA-1088 / PV-4</strain>
    </source>
</reference>
<reference key="2">
    <citation type="journal article" date="2018" name="Nature">
        <title>Mutant phenotypes for thousands of bacterial genes of unknown function.</title>
        <authorList>
            <person name="Price M.N."/>
            <person name="Wetmore K.M."/>
            <person name="Waters R.J."/>
            <person name="Callaghan M."/>
            <person name="Ray J."/>
            <person name="Liu H."/>
            <person name="Kuehl J.V."/>
            <person name="Melnyk R.A."/>
            <person name="Lamson J.S."/>
            <person name="Suh Y."/>
            <person name="Carlson H.K."/>
            <person name="Esquivel Z."/>
            <person name="Sadeeshkumar H."/>
            <person name="Chakraborty R."/>
            <person name="Zane G.M."/>
            <person name="Rubin B.E."/>
            <person name="Wall J.D."/>
            <person name="Visel A."/>
            <person name="Bristow J."/>
            <person name="Blow M.J."/>
            <person name="Arkin A.P."/>
            <person name="Deutschbauer A.M."/>
        </authorList>
    </citation>
    <scope>FUNCTION [LARGE SCALE ANALYSIS]</scope>
    <scope>SUBUNIT</scope>
</reference>
<reference evidence="9 10" key="3">
    <citation type="journal article" date="2015" name="Biochemistry">
        <title>Experimental strategies for functional annotation and metabolism discovery: targeted screening of solute binding proteins and unbiased panning of metabolomes.</title>
        <authorList>
            <person name="Vetting M.W."/>
            <person name="Al-Obaidi N."/>
            <person name="Zhao S."/>
            <person name="San Francisco B."/>
            <person name="Kim J."/>
            <person name="Wichelecki D.J."/>
            <person name="Bouvier J.T."/>
            <person name="Solbiati J.O."/>
            <person name="Vu H."/>
            <person name="Zhang X."/>
            <person name="Rodionov D.A."/>
            <person name="Love J.D."/>
            <person name="Hillerich B.S."/>
            <person name="Seidel R.D."/>
            <person name="Quinn R.J."/>
            <person name="Osterman A.L."/>
            <person name="Cronan J.E."/>
            <person name="Jacobson M.P."/>
            <person name="Gerlt J.A."/>
            <person name="Almo S.C."/>
        </authorList>
    </citation>
    <scope>X-RAY CRYSTALLOGRAPHY (1.50 ANGSTROMS) OF 32-336 IN COMPLEXES WITH SUCCINATE AND (S)-MALATE</scope>
    <scope>FUNCTION</scope>
</reference>
<accession>A3QCW5</accession>
<keyword id="KW-0002">3D-structure</keyword>
<keyword id="KW-0574">Periplasm</keyword>
<keyword id="KW-1185">Reference proteome</keyword>
<keyword id="KW-0732">Signal</keyword>
<keyword id="KW-0813">Transport</keyword>
<organism evidence="8">
    <name type="scientific">Shewanella loihica (strain ATCC BAA-1088 / PV-4)</name>
    <dbReference type="NCBI Taxonomy" id="323850"/>
    <lineage>
        <taxon>Bacteria</taxon>
        <taxon>Pseudomonadati</taxon>
        <taxon>Pseudomonadota</taxon>
        <taxon>Gammaproteobacteria</taxon>
        <taxon>Alteromonadales</taxon>
        <taxon>Shewanellaceae</taxon>
        <taxon>Shewanella</taxon>
    </lineage>
</organism>
<comment type="function">
    <text evidence="2 4 5">Part of the tripartite ATP-independent periplasmic (TRAP) transport system DctPQM involved in C4-dicarboxylates uptake (By similarity). Required for the utilization of succinate, fumarate, L-malate and alpha-ketoglutarate (PubMed:29769716). Binds succinate and malate (PubMed:25540822).</text>
</comment>
<comment type="subunit">
    <text evidence="2 7">The complex comprises the extracytoplasmic solute receptor protein DctP, and the two transmembrane proteins DctQ and DctM.</text>
</comment>
<comment type="subcellular location">
    <subcellularLocation>
        <location evidence="1">Periplasm</location>
    </subcellularLocation>
</comment>
<comment type="similarity">
    <text evidence="6">Belongs to the bacterial solute-binding protein 7 family.</text>
</comment>
<feature type="signal peptide" evidence="3">
    <location>
        <begin position="1"/>
        <end position="31"/>
    </location>
</feature>
<feature type="chain" id="PRO_5002656810" description="C4-dicarboxylate-binding periplasmic protein DctP">
    <location>
        <begin position="32"/>
        <end position="336"/>
    </location>
</feature>
<feature type="binding site" evidence="4 9">
    <location>
        <position position="48"/>
    </location>
    <ligand>
        <name>(S)-malate</name>
        <dbReference type="ChEBI" id="CHEBI:15589"/>
    </ligand>
</feature>
<feature type="binding site" evidence="4 10">
    <location>
        <position position="48"/>
    </location>
    <ligand>
        <name>succinate</name>
        <dbReference type="ChEBI" id="CHEBI:30031"/>
    </ligand>
</feature>
<feature type="binding site" evidence="4 9">
    <location>
        <position position="101"/>
    </location>
    <ligand>
        <name>(S)-malate</name>
        <dbReference type="ChEBI" id="CHEBI:15589"/>
    </ligand>
</feature>
<feature type="binding site" evidence="4 10">
    <location>
        <position position="101"/>
    </location>
    <ligand>
        <name>succinate</name>
        <dbReference type="ChEBI" id="CHEBI:30031"/>
    </ligand>
</feature>
<feature type="binding site" evidence="4 9">
    <location>
        <position position="176"/>
    </location>
    <ligand>
        <name>(S)-malate</name>
        <dbReference type="ChEBI" id="CHEBI:15589"/>
    </ligand>
</feature>
<feature type="binding site" evidence="4 10">
    <location>
        <position position="176"/>
    </location>
    <ligand>
        <name>succinate</name>
        <dbReference type="ChEBI" id="CHEBI:30031"/>
    </ligand>
</feature>
<feature type="binding site" evidence="4 9">
    <location>
        <position position="216"/>
    </location>
    <ligand>
        <name>(S)-malate</name>
        <dbReference type="ChEBI" id="CHEBI:15589"/>
    </ligand>
</feature>
<feature type="binding site" evidence="4 10">
    <location>
        <position position="216"/>
    </location>
    <ligand>
        <name>succinate</name>
        <dbReference type="ChEBI" id="CHEBI:30031"/>
    </ligand>
</feature>
<feature type="binding site" evidence="4 9">
    <location>
        <position position="220"/>
    </location>
    <ligand>
        <name>(S)-malate</name>
        <dbReference type="ChEBI" id="CHEBI:15589"/>
    </ligand>
</feature>
<feature type="binding site" evidence="4 10">
    <location>
        <position position="220"/>
    </location>
    <ligand>
        <name>succinate</name>
        <dbReference type="ChEBI" id="CHEBI:30031"/>
    </ligand>
</feature>
<feature type="binding site" evidence="4 9">
    <location>
        <position position="243"/>
    </location>
    <ligand>
        <name>(S)-malate</name>
        <dbReference type="ChEBI" id="CHEBI:15589"/>
    </ligand>
</feature>
<feature type="binding site" evidence="4 10">
    <location>
        <position position="243"/>
    </location>
    <ligand>
        <name>succinate</name>
        <dbReference type="ChEBI" id="CHEBI:30031"/>
    </ligand>
</feature>
<feature type="strand" evidence="11">
    <location>
        <begin position="34"/>
        <end position="39"/>
    </location>
</feature>
<feature type="strand" evidence="11">
    <location>
        <begin position="44"/>
        <end position="46"/>
    </location>
</feature>
<feature type="helix" evidence="11">
    <location>
        <begin position="47"/>
        <end position="62"/>
    </location>
</feature>
<feature type="turn" evidence="11">
    <location>
        <begin position="64"/>
        <end position="66"/>
    </location>
</feature>
<feature type="strand" evidence="11">
    <location>
        <begin position="67"/>
        <end position="72"/>
    </location>
</feature>
<feature type="turn" evidence="11">
    <location>
        <begin position="80"/>
        <end position="82"/>
    </location>
</feature>
<feature type="helix" evidence="11">
    <location>
        <begin position="83"/>
        <end position="88"/>
    </location>
</feature>
<feature type="strand" evidence="11">
    <location>
        <begin position="93"/>
        <end position="95"/>
    </location>
</feature>
<feature type="helix" evidence="11">
    <location>
        <begin position="99"/>
        <end position="101"/>
    </location>
</feature>
<feature type="turn" evidence="11">
    <location>
        <begin position="103"/>
        <end position="105"/>
    </location>
</feature>
<feature type="helix" evidence="11">
    <location>
        <begin position="109"/>
        <end position="113"/>
    </location>
</feature>
<feature type="helix" evidence="11">
    <location>
        <begin position="121"/>
        <end position="129"/>
    </location>
</feature>
<feature type="helix" evidence="11">
    <location>
        <begin position="131"/>
        <end position="135"/>
    </location>
</feature>
<feature type="helix" evidence="11">
    <location>
        <begin position="136"/>
        <end position="138"/>
    </location>
</feature>
<feature type="helix" evidence="11">
    <location>
        <begin position="141"/>
        <end position="143"/>
    </location>
</feature>
<feature type="strand" evidence="11">
    <location>
        <begin position="145"/>
        <end position="162"/>
    </location>
</feature>
<feature type="helix" evidence="11">
    <location>
        <begin position="167"/>
        <end position="170"/>
    </location>
</feature>
<feature type="strand" evidence="11">
    <location>
        <begin position="174"/>
        <end position="177"/>
    </location>
</feature>
<feature type="helix" evidence="11">
    <location>
        <begin position="181"/>
        <end position="188"/>
    </location>
</feature>
<feature type="turn" evidence="11">
    <location>
        <begin position="189"/>
        <end position="191"/>
    </location>
</feature>
<feature type="strand" evidence="11">
    <location>
        <begin position="193"/>
        <end position="196"/>
    </location>
</feature>
<feature type="helix" evidence="11">
    <location>
        <begin position="199"/>
        <end position="201"/>
    </location>
</feature>
<feature type="helix" evidence="11">
    <location>
        <begin position="202"/>
        <end position="207"/>
    </location>
</feature>
<feature type="strand" evidence="11">
    <location>
        <begin position="210"/>
        <end position="216"/>
    </location>
</feature>
<feature type="helix" evidence="11">
    <location>
        <begin position="218"/>
        <end position="223"/>
    </location>
</feature>
<feature type="helix" evidence="11">
    <location>
        <begin position="226"/>
        <end position="229"/>
    </location>
</feature>
<feature type="strand" evidence="11">
    <location>
        <begin position="231"/>
        <end position="248"/>
    </location>
</feature>
<feature type="helix" evidence="11">
    <location>
        <begin position="249"/>
        <end position="254"/>
    </location>
</feature>
<feature type="helix" evidence="11">
    <location>
        <begin position="257"/>
        <end position="292"/>
    </location>
</feature>
<feature type="strand" evidence="11">
    <location>
        <begin position="294"/>
        <end position="299"/>
    </location>
</feature>
<feature type="helix" evidence="11">
    <location>
        <begin position="302"/>
        <end position="311"/>
    </location>
</feature>
<feature type="helix" evidence="11">
    <location>
        <begin position="314"/>
        <end position="323"/>
    </location>
</feature>
<feature type="helix" evidence="11">
    <location>
        <begin position="325"/>
        <end position="333"/>
    </location>
</feature>
<protein>
    <recommendedName>
        <fullName evidence="6">C4-dicarboxylate-binding periplasmic protein DctP</fullName>
    </recommendedName>
</protein>
<proteinExistence type="evidence at protein level"/>